<comment type="subcellular location">
    <subcellularLocation>
        <location evidence="5">Secreted</location>
    </subcellularLocation>
</comment>
<comment type="similarity">
    <text evidence="4">Belongs to the plant self-incompatibility (S1) protein family.</text>
</comment>
<comment type="sequence caution" evidence="4">
    <conflict type="erroneous termination">
        <sequence resource="EMBL-CDS" id="ABK28126"/>
    </conflict>
    <text>Extended C-terminus.</text>
</comment>
<organism>
    <name type="scientific">Arabidopsis thaliana</name>
    <name type="common">Mouse-ear cress</name>
    <dbReference type="NCBI Taxonomy" id="3702"/>
    <lineage>
        <taxon>Eukaryota</taxon>
        <taxon>Viridiplantae</taxon>
        <taxon>Streptophyta</taxon>
        <taxon>Embryophyta</taxon>
        <taxon>Tracheophyta</taxon>
        <taxon>Spermatophyta</taxon>
        <taxon>Magnoliopsida</taxon>
        <taxon>eudicotyledons</taxon>
        <taxon>Gunneridae</taxon>
        <taxon>Pentapetalae</taxon>
        <taxon>rosids</taxon>
        <taxon>malvids</taxon>
        <taxon>Brassicales</taxon>
        <taxon>Brassicaceae</taxon>
        <taxon>Camelineae</taxon>
        <taxon>Arabidopsis</taxon>
    </lineage>
</organism>
<gene>
    <name evidence="3" type="primary">SPH30</name>
    <name evidence="6" type="ordered locus">At5g37147</name>
    <name evidence="4" type="ORF">MJG14</name>
</gene>
<proteinExistence type="evidence at transcript level"/>
<reference key="1">
    <citation type="journal article" date="1999" name="DNA Res.">
        <title>Structural analysis of Arabidopsis thaliana chromosome 5. IX. Sequence features of the regions of 1,011,550 bp covered by seventeen P1 and TAC clones.</title>
        <authorList>
            <person name="Kaneko T."/>
            <person name="Katoh T."/>
            <person name="Sato S."/>
            <person name="Nakamura Y."/>
            <person name="Asamizu E."/>
            <person name="Kotani H."/>
            <person name="Miyajima N."/>
            <person name="Tabata S."/>
        </authorList>
    </citation>
    <scope>NUCLEOTIDE SEQUENCE [LARGE SCALE GENOMIC DNA]</scope>
    <source>
        <strain>cv. Columbia</strain>
    </source>
</reference>
<reference key="2">
    <citation type="journal article" date="2017" name="Plant J.">
        <title>Araport11: a complete reannotation of the Arabidopsis thaliana reference genome.</title>
        <authorList>
            <person name="Cheng C.Y."/>
            <person name="Krishnakumar V."/>
            <person name="Chan A.P."/>
            <person name="Thibaud-Nissen F."/>
            <person name="Schobel S."/>
            <person name="Town C.D."/>
        </authorList>
    </citation>
    <scope>GENOME REANNOTATION</scope>
    <source>
        <strain>cv. Columbia</strain>
    </source>
</reference>
<reference key="3">
    <citation type="journal article" date="2006" name="Plant Biotechnol. J.">
        <title>Simultaneous high-throughput recombinational cloning of open reading frames in closed and open configurations.</title>
        <authorList>
            <person name="Underwood B.A."/>
            <person name="Vanderhaeghen R."/>
            <person name="Whitford R."/>
            <person name="Town C.D."/>
            <person name="Hilson P."/>
        </authorList>
    </citation>
    <scope>NUCLEOTIDE SEQUENCE [LARGE SCALE GENOMIC DNA]</scope>
    <source>
        <strain>cv. Columbia</strain>
    </source>
</reference>
<reference key="4">
    <citation type="journal article" date="1999" name="Plant Mol. Biol.">
        <title>Analysis of Arabidopsis genome sequence reveals a large new gene family in plants.</title>
        <authorList>
            <person name="Ride J.P."/>
            <person name="Davies E.M."/>
            <person name="Franklin F.C.H."/>
            <person name="Marshall D.F."/>
        </authorList>
    </citation>
    <scope>GENE FAMILY</scope>
    <scope>NOMENCLATURE</scope>
    <source>
        <strain>cv. Columbia</strain>
    </source>
</reference>
<reference key="5">
    <citation type="journal article" date="2007" name="BMC Genomics">
        <title>Experimental validation of novel genes predicted in the un-annotated regions of the Arabidopsis genome.</title>
        <authorList>
            <person name="Moskal W.A. Jr."/>
            <person name="Wu H.C."/>
            <person name="Underwood B.A."/>
            <person name="Wang W."/>
            <person name="Town C.D."/>
            <person name="Xiao Y.-L."/>
        </authorList>
    </citation>
    <scope>NUCLEOTIDE SEQUENCE [LARGE SCALE MRNA]</scope>
    <source>
        <strain>cv. Columbia</strain>
    </source>
</reference>
<feature type="signal peptide" evidence="1">
    <location>
        <begin position="1"/>
        <end status="unknown"/>
    </location>
</feature>
<feature type="chain" id="PRO_0000439577" description="S-protein homolog 30">
    <location>
        <begin status="unknown"/>
        <end position="130"/>
    </location>
</feature>
<feature type="glycosylation site" description="N-linked (GlcNAc...) asparagine" evidence="2">
    <location>
        <position position="64"/>
    </location>
</feature>
<feature type="glycosylation site" description="N-linked (GlcNAc...) asparagine" evidence="2">
    <location>
        <position position="77"/>
    </location>
</feature>
<dbReference type="EMBL" id="AB017068">
    <property type="status" value="NOT_ANNOTATED_CDS"/>
    <property type="molecule type" value="Genomic_DNA"/>
</dbReference>
<dbReference type="EMBL" id="CP002688">
    <property type="status" value="NOT_ANNOTATED_CDS"/>
    <property type="molecule type" value="Genomic_DNA"/>
</dbReference>
<dbReference type="EMBL" id="DQ487711">
    <property type="protein sequence ID" value="ABF59468.1"/>
    <property type="molecule type" value="Genomic_DNA"/>
</dbReference>
<dbReference type="EMBL" id="DQ652809">
    <property type="protein sequence ID" value="ABK28126.1"/>
    <property type="status" value="ALT_SEQ"/>
    <property type="molecule type" value="Genomic_DNA"/>
</dbReference>
<dbReference type="EMBL" id="EF183139">
    <property type="status" value="NOT_ANNOTATED_CDS"/>
    <property type="molecule type" value="mRNA"/>
</dbReference>
<dbReference type="SMR" id="Q1G373"/>
<dbReference type="GlyCosmos" id="Q1G373">
    <property type="glycosylation" value="2 sites, No reported glycans"/>
</dbReference>
<dbReference type="GlyGen" id="Q1G373">
    <property type="glycosylation" value="2 sites"/>
</dbReference>
<dbReference type="Araport" id="AT5G37147"/>
<dbReference type="TAIR" id="AT5G37147"/>
<dbReference type="InParanoid" id="Q1G373"/>
<dbReference type="PRO" id="PR:Q1G373"/>
<dbReference type="Proteomes" id="UP000006548">
    <property type="component" value="Chromosome 5"/>
</dbReference>
<dbReference type="ExpressionAtlas" id="Q1G373">
    <property type="expression patterns" value="differential"/>
</dbReference>
<dbReference type="GO" id="GO:0005576">
    <property type="term" value="C:extracellular region"/>
    <property type="evidence" value="ECO:0007669"/>
    <property type="project" value="UniProtKB-SubCell"/>
</dbReference>
<dbReference type="GO" id="GO:0060320">
    <property type="term" value="P:rejection of self pollen"/>
    <property type="evidence" value="ECO:0007669"/>
    <property type="project" value="UniProtKB-KW"/>
</dbReference>
<dbReference type="InterPro" id="IPR010264">
    <property type="entry name" value="Self-incomp_S1"/>
</dbReference>
<dbReference type="PANTHER" id="PTHR31232">
    <property type="match status" value="1"/>
</dbReference>
<dbReference type="PANTHER" id="PTHR31232:SF161">
    <property type="entry name" value="F11M15.10 PROTEIN-RELATED"/>
    <property type="match status" value="1"/>
</dbReference>
<dbReference type="Pfam" id="PF05938">
    <property type="entry name" value="Self-incomp_S1"/>
    <property type="match status" value="1"/>
</dbReference>
<sequence>MLVTITCFGLNQACIKNHVVILNLLAPGRILEYHCYSNVDDLGVKRLDFNATPFTIKFHDEIPNLTKWNCILRQGPNNSMEYSYDVEVYKAGPRLIPRCGQLRAWAARIDGIYFARKYNTPLKRVLFWNK</sequence>
<evidence type="ECO:0000255" key="1"/>
<evidence type="ECO:0000255" key="2">
    <source>
        <dbReference type="PROSITE-ProRule" id="PRU00498"/>
    </source>
</evidence>
<evidence type="ECO:0000303" key="3">
    <source>
    </source>
</evidence>
<evidence type="ECO:0000305" key="4"/>
<evidence type="ECO:0000305" key="5">
    <source>
    </source>
</evidence>
<evidence type="ECO:0000312" key="6">
    <source>
        <dbReference type="Araport" id="AT5G37147"/>
    </source>
</evidence>
<accession>Q1G373</accession>
<accession>A0ME41</accession>
<keyword id="KW-0325">Glycoprotein</keyword>
<keyword id="KW-1185">Reference proteome</keyword>
<keyword id="KW-0964">Secreted</keyword>
<keyword id="KW-0713">Self-incompatibility</keyword>
<keyword id="KW-0732">Signal</keyword>
<protein>
    <recommendedName>
        <fullName evidence="3">S-protein homolog 30</fullName>
    </recommendedName>
</protein>
<name>SPH30_ARATH</name>